<dbReference type="EMBL" id="AY083608">
    <property type="protein sequence ID" value="AAM03315.1"/>
    <property type="molecule type" value="mRNA"/>
</dbReference>
<dbReference type="EMBL" id="AY083908">
    <property type="protein sequence ID" value="AAM08123.1"/>
    <property type="molecule type" value="Genomic_DNA"/>
</dbReference>
<dbReference type="RefSeq" id="NP_989799.1">
    <property type="nucleotide sequence ID" value="NM_204468.1"/>
</dbReference>
<dbReference type="SMR" id="Q7T0L4"/>
<dbReference type="BioGRID" id="675420">
    <property type="interactions" value="1"/>
</dbReference>
<dbReference type="FunCoup" id="Q7T0L4">
    <property type="interactions" value="1245"/>
</dbReference>
<dbReference type="STRING" id="9031.ENSGALP00000001323"/>
<dbReference type="PaxDb" id="9031-ENSGALP00000001323"/>
<dbReference type="KEGG" id="gga:395122"/>
<dbReference type="VEuPathDB" id="HostDB:geneid_395122"/>
<dbReference type="eggNOG" id="ENOG502RPXS">
    <property type="taxonomic scope" value="Eukaryota"/>
</dbReference>
<dbReference type="HOGENOM" id="CLU_028192_0_0_1"/>
<dbReference type="InParanoid" id="Q7T0L4"/>
<dbReference type="OrthoDB" id="21243at2759"/>
<dbReference type="PhylomeDB" id="Q7T0L4"/>
<dbReference type="TreeFam" id="TF332348"/>
<dbReference type="Reactome" id="R-GGA-418124">
    <property type="pathway name" value="Telomere maintenance"/>
</dbReference>
<dbReference type="PRO" id="PR:Q7T0L4"/>
<dbReference type="Proteomes" id="UP000000539">
    <property type="component" value="Unassembled WGS sequence"/>
</dbReference>
<dbReference type="GO" id="GO:0000781">
    <property type="term" value="C:chromosome, telomeric region"/>
    <property type="evidence" value="ECO:0000250"/>
    <property type="project" value="UniProtKB"/>
</dbReference>
<dbReference type="GO" id="GO:0005737">
    <property type="term" value="C:cytoplasm"/>
    <property type="evidence" value="ECO:0000250"/>
    <property type="project" value="UniProtKB"/>
</dbReference>
<dbReference type="GO" id="GO:0005654">
    <property type="term" value="C:nucleoplasm"/>
    <property type="evidence" value="ECO:0000304"/>
    <property type="project" value="Reactome"/>
</dbReference>
<dbReference type="GO" id="GO:0005634">
    <property type="term" value="C:nucleus"/>
    <property type="evidence" value="ECO:0000250"/>
    <property type="project" value="UniProtKB"/>
</dbReference>
<dbReference type="GO" id="GO:0070187">
    <property type="term" value="C:shelterin complex"/>
    <property type="evidence" value="ECO:0000318"/>
    <property type="project" value="GO_Central"/>
</dbReference>
<dbReference type="GO" id="GO:0042162">
    <property type="term" value="F:telomeric DNA binding"/>
    <property type="evidence" value="ECO:0000318"/>
    <property type="project" value="GO_Central"/>
</dbReference>
<dbReference type="GO" id="GO:0048239">
    <property type="term" value="P:negative regulation of DNA recombination at telomere"/>
    <property type="evidence" value="ECO:0000250"/>
    <property type="project" value="UniProtKB"/>
</dbReference>
<dbReference type="GO" id="GO:0043123">
    <property type="term" value="P:positive regulation of canonical NF-kappaB signal transduction"/>
    <property type="evidence" value="ECO:0000250"/>
    <property type="project" value="UniProtKB"/>
</dbReference>
<dbReference type="GO" id="GO:0051092">
    <property type="term" value="P:positive regulation of NF-kappaB transcription factor activity"/>
    <property type="evidence" value="ECO:0000250"/>
    <property type="project" value="UniProtKB"/>
</dbReference>
<dbReference type="GO" id="GO:0031848">
    <property type="term" value="P:protection from non-homologous end joining at telomere"/>
    <property type="evidence" value="ECO:0000318"/>
    <property type="project" value="GO_Central"/>
</dbReference>
<dbReference type="GO" id="GO:0006355">
    <property type="term" value="P:regulation of DNA-templated transcription"/>
    <property type="evidence" value="ECO:0000250"/>
    <property type="project" value="UniProtKB"/>
</dbReference>
<dbReference type="GO" id="GO:0010569">
    <property type="term" value="P:regulation of double-strand break repair via homologous recombination"/>
    <property type="evidence" value="ECO:0000250"/>
    <property type="project" value="UniProtKB"/>
</dbReference>
<dbReference type="GO" id="GO:0010833">
    <property type="term" value="P:telomere maintenance via telomere lengthening"/>
    <property type="evidence" value="ECO:0000250"/>
    <property type="project" value="UniProtKB"/>
</dbReference>
<dbReference type="CDD" id="cd11655">
    <property type="entry name" value="rap1_myb-like"/>
    <property type="match status" value="1"/>
</dbReference>
<dbReference type="CDD" id="cd11653">
    <property type="entry name" value="rap1_RCT"/>
    <property type="match status" value="1"/>
</dbReference>
<dbReference type="FunFam" id="1.10.10.2170:FF:000001">
    <property type="entry name" value="Telomeric repeat-binding factor 2-interacting protein 1"/>
    <property type="match status" value="1"/>
</dbReference>
<dbReference type="FunFam" id="1.10.10.60:FF:000246">
    <property type="entry name" value="Telomeric repeat-binding factor 2-interacting protein 1"/>
    <property type="match status" value="1"/>
</dbReference>
<dbReference type="Gene3D" id="1.10.10.2170">
    <property type="match status" value="1"/>
</dbReference>
<dbReference type="Gene3D" id="1.10.10.60">
    <property type="entry name" value="Homeodomain-like"/>
    <property type="match status" value="1"/>
</dbReference>
<dbReference type="InterPro" id="IPR009057">
    <property type="entry name" value="Homeodomain-like_sf"/>
</dbReference>
<dbReference type="InterPro" id="IPR021661">
    <property type="entry name" value="Rap1_C"/>
</dbReference>
<dbReference type="InterPro" id="IPR038104">
    <property type="entry name" value="Rap1_C_sf"/>
</dbReference>
<dbReference type="InterPro" id="IPR039595">
    <property type="entry name" value="TE2IP/Rap1"/>
</dbReference>
<dbReference type="InterPro" id="IPR015010">
    <property type="entry name" value="TERF2IP_Myb"/>
</dbReference>
<dbReference type="PANTHER" id="PTHR16466">
    <property type="entry name" value="TELOMERE REPEAT-BINDING FACTOR 2-INTERACTING PROTEIN 1"/>
    <property type="match status" value="1"/>
</dbReference>
<dbReference type="PANTHER" id="PTHR16466:SF6">
    <property type="entry name" value="TELOMERIC REPEAT-BINDING FACTOR 2-INTERACTING PROTEIN 1"/>
    <property type="match status" value="1"/>
</dbReference>
<dbReference type="Pfam" id="PF08914">
    <property type="entry name" value="Myb_Rap1"/>
    <property type="match status" value="1"/>
</dbReference>
<dbReference type="Pfam" id="PF11626">
    <property type="entry name" value="Rap1_C"/>
    <property type="match status" value="1"/>
</dbReference>
<dbReference type="SUPFAM" id="SSF46689">
    <property type="entry name" value="Homeodomain-like"/>
    <property type="match status" value="1"/>
</dbReference>
<feature type="chain" id="PRO_0000398642" description="Telomeric repeat-binding factor 2-interacting protein 1">
    <location>
        <begin position="1"/>
        <end position="329"/>
    </location>
</feature>
<feature type="domain" description="BRCT">
    <location>
        <begin position="63"/>
        <end position="86"/>
    </location>
</feature>
<feature type="domain" description="Myb-like">
    <location>
        <begin position="94"/>
        <end position="153"/>
    </location>
</feature>
<feature type="region of interest" description="Disordered" evidence="3">
    <location>
        <begin position="179"/>
        <end position="206"/>
    </location>
</feature>
<feature type="short sequence motif" description="Nuclear localization signal" evidence="2">
    <location>
        <begin position="313"/>
        <end position="329"/>
    </location>
</feature>
<feature type="sequence conflict" description="In Ref. 1; AAM08123." evidence="5" ref="1">
    <location>
        <position position="121"/>
    </location>
</feature>
<gene>
    <name type="primary">TERF2IP</name>
    <name type="synonym">RAP1</name>
</gene>
<protein>
    <recommendedName>
        <fullName>Telomeric repeat-binding factor 2-interacting protein 1</fullName>
        <shortName>TERF2-interacting telomeric protein 1</shortName>
        <shortName>TRF2-interacting telomeric protein 1</shortName>
    </recommendedName>
    <alternativeName>
        <fullName>Repressor/activator protein 1 homolog</fullName>
        <shortName>RAP1 homolog</shortName>
        <shortName>cRAP1</shortName>
    </alternativeName>
</protein>
<organism>
    <name type="scientific">Gallus gallus</name>
    <name type="common">Chicken</name>
    <dbReference type="NCBI Taxonomy" id="9031"/>
    <lineage>
        <taxon>Eukaryota</taxon>
        <taxon>Metazoa</taxon>
        <taxon>Chordata</taxon>
        <taxon>Craniata</taxon>
        <taxon>Vertebrata</taxon>
        <taxon>Euteleostomi</taxon>
        <taxon>Archelosauria</taxon>
        <taxon>Archosauria</taxon>
        <taxon>Dinosauria</taxon>
        <taxon>Saurischia</taxon>
        <taxon>Theropoda</taxon>
        <taxon>Coelurosauria</taxon>
        <taxon>Aves</taxon>
        <taxon>Neognathae</taxon>
        <taxon>Galloanserae</taxon>
        <taxon>Galliformes</taxon>
        <taxon>Phasianidae</taxon>
        <taxon>Phasianinae</taxon>
        <taxon>Gallus</taxon>
    </lineage>
</organism>
<name>TE2IP_CHICK</name>
<sequence length="329" mass="36182">MAAPPRKVFVWEDGTPMRFYIRPGMAKLRLAPLLLAGGAGLCRVQEPGAVHLVQPGEPAPDGAVSTDYVVACVESQRRLPLDLYRHSGPAPLAASPRGRLPFTEAEDAALLRAVRERSGAPRVSGTALWKELECTGLTRHSWQAMRDRYLRHLRPLHRESQQTEEAAAPMGIFEAANREFESSESGSDTSDTPDELPLQNGEGTFPLEAASGLQTGLDDCALPAAQGENKQTNTFSDSSKAEEAAQIIQHFMEEFHTDLLTVTQALLKNSGEVEATSYYLHAGQRLDGYPVWSREDDLELQKDDEDVRSKLIAKFGAENVARRVAFRKS</sequence>
<keyword id="KW-0010">Activator</keyword>
<keyword id="KW-0158">Chromosome</keyword>
<keyword id="KW-0539">Nucleus</keyword>
<keyword id="KW-1185">Reference proteome</keyword>
<keyword id="KW-0779">Telomere</keyword>
<keyword id="KW-0804">Transcription</keyword>
<keyword id="KW-0805">Transcription regulation</keyword>
<proteinExistence type="evidence at protein level"/>
<accession>Q7T0L4</accession>
<accession>Q8JGU1</accession>
<comment type="function">
    <text evidence="1">Acts both as a regulator of telomere function and as a transcription regulator. Involved in the regulation of telomere length and protection as a component of the shelterin complex (telosome). Does not bind DNA directly: recruited to telomeric double-stranded 5'-TTAGGG-3' repeats via its interaction with terf2. Independently of its function in telomeres, also acts as a transcription regulator: recruited to extratelomeric 5'-TTAGGG-3' sites via its association with terf2 or other factors, and regulates gene expression (By similarity).</text>
</comment>
<comment type="subunit">
    <text evidence="1 4">Homodimer. Component of the shelterin complex (telosome) (By similarity). Interacts with terf2; the interaction is direct.</text>
</comment>
<comment type="subcellular location">
    <subcellularLocation>
        <location evidence="4">Nucleus</location>
    </subcellularLocation>
    <subcellularLocation>
        <location evidence="4">Chromosome</location>
        <location evidence="4">Telomere</location>
    </subcellularLocation>
</comment>
<comment type="miscellaneous">
    <text evidence="6">Shares a bidirectional promoter with KARS.</text>
</comment>
<comment type="similarity">
    <text evidence="5">Belongs to the RAP1 family.</text>
</comment>
<evidence type="ECO:0000250" key="1"/>
<evidence type="ECO:0000255" key="2"/>
<evidence type="ECO:0000256" key="3">
    <source>
        <dbReference type="SAM" id="MobiDB-lite"/>
    </source>
</evidence>
<evidence type="ECO:0000269" key="4">
    <source>
    </source>
</evidence>
<evidence type="ECO:0000305" key="5"/>
<evidence type="ECO:0000305" key="6">
    <source>
    </source>
</evidence>
<reference key="1">
    <citation type="journal article" date="2003" name="Gene">
        <title>The telomeric protein Rap1 is conserved in vertebrates and is expressed from a bidirectional promoter positioned between the Rap1 and KARS genes.</title>
        <authorList>
            <person name="Tan M."/>
            <person name="Wei C."/>
            <person name="Price C.M."/>
        </authorList>
    </citation>
    <scope>NUCLEOTIDE SEQUENCE [GENOMIC DNA / MRNA]</scope>
    <scope>SUBCELLULAR LOCATION</scope>
    <scope>INTERACTION WITH TERF2</scope>
</reference>